<evidence type="ECO:0000255" key="1">
    <source>
        <dbReference type="HAMAP-Rule" id="MF_01201"/>
    </source>
</evidence>
<accession>B8E9P2</accession>
<reference key="1">
    <citation type="submission" date="2008-12" db="EMBL/GenBank/DDBJ databases">
        <title>Complete sequence of chromosome of Shewanella baltica OS223.</title>
        <authorList>
            <consortium name="US DOE Joint Genome Institute"/>
            <person name="Lucas S."/>
            <person name="Copeland A."/>
            <person name="Lapidus A."/>
            <person name="Glavina del Rio T."/>
            <person name="Dalin E."/>
            <person name="Tice H."/>
            <person name="Bruce D."/>
            <person name="Goodwin L."/>
            <person name="Pitluck S."/>
            <person name="Chertkov O."/>
            <person name="Meincke L."/>
            <person name="Brettin T."/>
            <person name="Detter J.C."/>
            <person name="Han C."/>
            <person name="Kuske C.R."/>
            <person name="Larimer F."/>
            <person name="Land M."/>
            <person name="Hauser L."/>
            <person name="Kyrpides N."/>
            <person name="Ovchinnikova G."/>
            <person name="Brettar I."/>
            <person name="Rodrigues J."/>
            <person name="Konstantinidis K."/>
            <person name="Tiedje J."/>
        </authorList>
    </citation>
    <scope>NUCLEOTIDE SEQUENCE [LARGE SCALE GENOMIC DNA]</scope>
    <source>
        <strain>OS223</strain>
    </source>
</reference>
<protein>
    <recommendedName>
        <fullName evidence="1">Alanine racemase</fullName>
        <ecNumber evidence="1">5.1.1.1</ecNumber>
    </recommendedName>
</protein>
<organism>
    <name type="scientific">Shewanella baltica (strain OS223)</name>
    <dbReference type="NCBI Taxonomy" id="407976"/>
    <lineage>
        <taxon>Bacteria</taxon>
        <taxon>Pseudomonadati</taxon>
        <taxon>Pseudomonadota</taxon>
        <taxon>Gammaproteobacteria</taxon>
        <taxon>Alteromonadales</taxon>
        <taxon>Shewanellaceae</taxon>
        <taxon>Shewanella</taxon>
    </lineage>
</organism>
<proteinExistence type="inferred from homology"/>
<sequence>MNPFPRAEISSSALQTNLAALRQQAPASRVMAVVKANGYGHGLLNVAHCLVSADGFGLARLDEALELRAGGVTARLLLLEGFFRATDLPLLVGHDIDTVVHHSSQLEMLEQTVLSKPVTVWLKVDSGMHRLGFTPEQFSTVYDRLMACPNVAKPIHLMTHFACADEPDNTYTSVQMAAFNSLTAGLPGFRTLANSAGALYWPQSQGDWIRPGIALYGVSPVTGDCGANHGLVPAMELVSQLIAVRDHKANQPVGYGCFWTAKQDTRLGVVAIGYGDGYPRNAPEGTPVWVNGRRVPIVGRVSMDMLTVDLGQDAQDKVGDSALLWGKALPVEEVAEHIGTIAYELVTKLTPRVAVCLA</sequence>
<keyword id="KW-0413">Isomerase</keyword>
<keyword id="KW-0663">Pyridoxal phosphate</keyword>
<dbReference type="EC" id="5.1.1.1" evidence="1"/>
<dbReference type="EMBL" id="CP001252">
    <property type="protein sequence ID" value="ACK45257.1"/>
    <property type="molecule type" value="Genomic_DNA"/>
</dbReference>
<dbReference type="RefSeq" id="WP_012586772.1">
    <property type="nucleotide sequence ID" value="NC_011663.1"/>
</dbReference>
<dbReference type="SMR" id="B8E9P2"/>
<dbReference type="KEGG" id="sbp:Sbal223_0738"/>
<dbReference type="HOGENOM" id="CLU_028393_1_0_6"/>
<dbReference type="UniPathway" id="UPA00042">
    <property type="reaction ID" value="UER00497"/>
</dbReference>
<dbReference type="Proteomes" id="UP000002507">
    <property type="component" value="Chromosome"/>
</dbReference>
<dbReference type="GO" id="GO:0005829">
    <property type="term" value="C:cytosol"/>
    <property type="evidence" value="ECO:0007669"/>
    <property type="project" value="TreeGrafter"/>
</dbReference>
<dbReference type="GO" id="GO:0008784">
    <property type="term" value="F:alanine racemase activity"/>
    <property type="evidence" value="ECO:0007669"/>
    <property type="project" value="UniProtKB-UniRule"/>
</dbReference>
<dbReference type="GO" id="GO:0030170">
    <property type="term" value="F:pyridoxal phosphate binding"/>
    <property type="evidence" value="ECO:0007669"/>
    <property type="project" value="UniProtKB-UniRule"/>
</dbReference>
<dbReference type="GO" id="GO:0030632">
    <property type="term" value="P:D-alanine biosynthetic process"/>
    <property type="evidence" value="ECO:0007669"/>
    <property type="project" value="UniProtKB-UniRule"/>
</dbReference>
<dbReference type="CDD" id="cd06827">
    <property type="entry name" value="PLPDE_III_AR_proteobact"/>
    <property type="match status" value="1"/>
</dbReference>
<dbReference type="FunFam" id="2.40.37.10:FF:000002">
    <property type="entry name" value="Alanine racemase"/>
    <property type="match status" value="1"/>
</dbReference>
<dbReference type="FunFam" id="3.20.20.10:FF:000002">
    <property type="entry name" value="Alanine racemase"/>
    <property type="match status" value="1"/>
</dbReference>
<dbReference type="Gene3D" id="3.20.20.10">
    <property type="entry name" value="Alanine racemase"/>
    <property type="match status" value="1"/>
</dbReference>
<dbReference type="Gene3D" id="2.40.37.10">
    <property type="entry name" value="Lyase, Ornithine Decarboxylase, Chain A, domain 1"/>
    <property type="match status" value="1"/>
</dbReference>
<dbReference type="HAMAP" id="MF_01201">
    <property type="entry name" value="Ala_racemase"/>
    <property type="match status" value="1"/>
</dbReference>
<dbReference type="InterPro" id="IPR000821">
    <property type="entry name" value="Ala_racemase"/>
</dbReference>
<dbReference type="InterPro" id="IPR009006">
    <property type="entry name" value="Ala_racemase/Decarboxylase_C"/>
</dbReference>
<dbReference type="InterPro" id="IPR011079">
    <property type="entry name" value="Ala_racemase_C"/>
</dbReference>
<dbReference type="InterPro" id="IPR001608">
    <property type="entry name" value="Ala_racemase_N"/>
</dbReference>
<dbReference type="InterPro" id="IPR020622">
    <property type="entry name" value="Ala_racemase_pyridoxalP-BS"/>
</dbReference>
<dbReference type="InterPro" id="IPR029066">
    <property type="entry name" value="PLP-binding_barrel"/>
</dbReference>
<dbReference type="NCBIfam" id="TIGR00492">
    <property type="entry name" value="alr"/>
    <property type="match status" value="1"/>
</dbReference>
<dbReference type="PANTHER" id="PTHR30511">
    <property type="entry name" value="ALANINE RACEMASE"/>
    <property type="match status" value="1"/>
</dbReference>
<dbReference type="PANTHER" id="PTHR30511:SF4">
    <property type="entry name" value="ALANINE RACEMASE, BIOSYNTHETIC"/>
    <property type="match status" value="1"/>
</dbReference>
<dbReference type="Pfam" id="PF00842">
    <property type="entry name" value="Ala_racemase_C"/>
    <property type="match status" value="1"/>
</dbReference>
<dbReference type="Pfam" id="PF01168">
    <property type="entry name" value="Ala_racemase_N"/>
    <property type="match status" value="1"/>
</dbReference>
<dbReference type="PRINTS" id="PR00992">
    <property type="entry name" value="ALARACEMASE"/>
</dbReference>
<dbReference type="SMART" id="SM01005">
    <property type="entry name" value="Ala_racemase_C"/>
    <property type="match status" value="1"/>
</dbReference>
<dbReference type="SUPFAM" id="SSF50621">
    <property type="entry name" value="Alanine racemase C-terminal domain-like"/>
    <property type="match status" value="1"/>
</dbReference>
<dbReference type="SUPFAM" id="SSF51419">
    <property type="entry name" value="PLP-binding barrel"/>
    <property type="match status" value="1"/>
</dbReference>
<dbReference type="PROSITE" id="PS00395">
    <property type="entry name" value="ALANINE_RACEMASE"/>
    <property type="match status" value="1"/>
</dbReference>
<feature type="chain" id="PRO_1000164609" description="Alanine racemase">
    <location>
        <begin position="1"/>
        <end position="358"/>
    </location>
</feature>
<feature type="active site" description="Proton acceptor; specific for D-alanine" evidence="1">
    <location>
        <position position="35"/>
    </location>
</feature>
<feature type="active site" description="Proton acceptor; specific for L-alanine" evidence="1">
    <location>
        <position position="255"/>
    </location>
</feature>
<feature type="binding site" evidence="1">
    <location>
        <position position="130"/>
    </location>
    <ligand>
        <name>substrate</name>
    </ligand>
</feature>
<feature type="binding site" evidence="1">
    <location>
        <position position="303"/>
    </location>
    <ligand>
        <name>substrate</name>
    </ligand>
</feature>
<feature type="modified residue" description="N6-(pyridoxal phosphate)lysine" evidence="1">
    <location>
        <position position="35"/>
    </location>
</feature>
<gene>
    <name type="primary">alr</name>
    <name type="ordered locus">Sbal223_0738</name>
</gene>
<comment type="function">
    <text evidence="1">Catalyzes the interconversion of L-alanine and D-alanine. May also act on other amino acids.</text>
</comment>
<comment type="catalytic activity">
    <reaction evidence="1">
        <text>L-alanine = D-alanine</text>
        <dbReference type="Rhea" id="RHEA:20249"/>
        <dbReference type="ChEBI" id="CHEBI:57416"/>
        <dbReference type="ChEBI" id="CHEBI:57972"/>
        <dbReference type="EC" id="5.1.1.1"/>
    </reaction>
</comment>
<comment type="cofactor">
    <cofactor evidence="1">
        <name>pyridoxal 5'-phosphate</name>
        <dbReference type="ChEBI" id="CHEBI:597326"/>
    </cofactor>
</comment>
<comment type="pathway">
    <text evidence="1">Amino-acid biosynthesis; D-alanine biosynthesis; D-alanine from L-alanine: step 1/1.</text>
</comment>
<comment type="similarity">
    <text evidence="1">Belongs to the alanine racemase family.</text>
</comment>
<name>ALR_SHEB2</name>